<comment type="function">
    <text evidence="1">Catalyzes the transfer of the enolpyruvyl moiety of phosphoenolpyruvate (PEP) to the 5-hydroxyl of shikimate-3-phosphate (S3P) to produce enolpyruvyl shikimate-3-phosphate and inorganic phosphate.</text>
</comment>
<comment type="catalytic activity">
    <reaction evidence="1">
        <text>3-phosphoshikimate + phosphoenolpyruvate = 5-O-(1-carboxyvinyl)-3-phosphoshikimate + phosphate</text>
        <dbReference type="Rhea" id="RHEA:21256"/>
        <dbReference type="ChEBI" id="CHEBI:43474"/>
        <dbReference type="ChEBI" id="CHEBI:57701"/>
        <dbReference type="ChEBI" id="CHEBI:58702"/>
        <dbReference type="ChEBI" id="CHEBI:145989"/>
        <dbReference type="EC" id="2.5.1.19"/>
    </reaction>
    <physiologicalReaction direction="left-to-right" evidence="1">
        <dbReference type="Rhea" id="RHEA:21257"/>
    </physiologicalReaction>
</comment>
<comment type="pathway">
    <text evidence="1">Metabolic intermediate biosynthesis; chorismate biosynthesis; chorismate from D-erythrose 4-phosphate and phosphoenolpyruvate: step 6/7.</text>
</comment>
<comment type="subunit">
    <text evidence="1">Monomer.</text>
</comment>
<comment type="subcellular location">
    <subcellularLocation>
        <location evidence="1">Cytoplasm</location>
    </subcellularLocation>
</comment>
<comment type="similarity">
    <text evidence="1">Belongs to the EPSP synthase family.</text>
</comment>
<organism>
    <name type="scientific">Chloroherpeton thalassium (strain ATCC 35110 / GB-78)</name>
    <dbReference type="NCBI Taxonomy" id="517418"/>
    <lineage>
        <taxon>Bacteria</taxon>
        <taxon>Pseudomonadati</taxon>
        <taxon>Chlorobiota</taxon>
        <taxon>Chlorobiia</taxon>
        <taxon>Chlorobiales</taxon>
        <taxon>Chloroherpetonaceae</taxon>
        <taxon>Chloroherpeton</taxon>
    </lineage>
</organism>
<evidence type="ECO:0000255" key="1">
    <source>
        <dbReference type="HAMAP-Rule" id="MF_00210"/>
    </source>
</evidence>
<gene>
    <name evidence="1" type="primary">aroA</name>
    <name type="ordered locus">Ctha_1357</name>
</gene>
<accession>B3QZC7</accession>
<feature type="chain" id="PRO_1000099683" description="3-phosphoshikimate 1-carboxyvinyltransferase">
    <location>
        <begin position="1"/>
        <end position="435"/>
    </location>
</feature>
<feature type="active site" description="Proton acceptor" evidence="1">
    <location>
        <position position="319"/>
    </location>
</feature>
<feature type="binding site" evidence="1">
    <location>
        <position position="15"/>
    </location>
    <ligand>
        <name>3-phosphoshikimate</name>
        <dbReference type="ChEBI" id="CHEBI:145989"/>
    </ligand>
</feature>
<feature type="binding site" evidence="1">
    <location>
        <position position="15"/>
    </location>
    <ligand>
        <name>phosphoenolpyruvate</name>
        <dbReference type="ChEBI" id="CHEBI:58702"/>
    </ligand>
</feature>
<feature type="binding site" evidence="1">
    <location>
        <position position="16"/>
    </location>
    <ligand>
        <name>3-phosphoshikimate</name>
        <dbReference type="ChEBI" id="CHEBI:145989"/>
    </ligand>
</feature>
<feature type="binding site" evidence="1">
    <location>
        <position position="20"/>
    </location>
    <ligand>
        <name>3-phosphoshikimate</name>
        <dbReference type="ChEBI" id="CHEBI:145989"/>
    </ligand>
</feature>
<feature type="binding site" evidence="1">
    <location>
        <position position="96"/>
    </location>
    <ligand>
        <name>phosphoenolpyruvate</name>
        <dbReference type="ChEBI" id="CHEBI:58702"/>
    </ligand>
</feature>
<feature type="binding site" evidence="1">
    <location>
        <position position="124"/>
    </location>
    <ligand>
        <name>phosphoenolpyruvate</name>
        <dbReference type="ChEBI" id="CHEBI:58702"/>
    </ligand>
</feature>
<feature type="binding site" evidence="1">
    <location>
        <position position="169"/>
    </location>
    <ligand>
        <name>3-phosphoshikimate</name>
        <dbReference type="ChEBI" id="CHEBI:145989"/>
    </ligand>
</feature>
<feature type="binding site" evidence="1">
    <location>
        <position position="171"/>
    </location>
    <ligand>
        <name>3-phosphoshikimate</name>
        <dbReference type="ChEBI" id="CHEBI:145989"/>
    </ligand>
</feature>
<feature type="binding site" evidence="1">
    <location>
        <position position="171"/>
    </location>
    <ligand>
        <name>phosphoenolpyruvate</name>
        <dbReference type="ChEBI" id="CHEBI:58702"/>
    </ligand>
</feature>
<feature type="binding site" evidence="1">
    <location>
        <position position="195"/>
    </location>
    <ligand>
        <name>3-phosphoshikimate</name>
        <dbReference type="ChEBI" id="CHEBI:145989"/>
    </ligand>
</feature>
<feature type="binding site" evidence="1">
    <location>
        <position position="319"/>
    </location>
    <ligand>
        <name>3-phosphoshikimate</name>
        <dbReference type="ChEBI" id="CHEBI:145989"/>
    </ligand>
</feature>
<feature type="binding site" evidence="1">
    <location>
        <position position="346"/>
    </location>
    <ligand>
        <name>3-phosphoshikimate</name>
        <dbReference type="ChEBI" id="CHEBI:145989"/>
    </ligand>
</feature>
<feature type="binding site" evidence="1">
    <location>
        <position position="350"/>
    </location>
    <ligand>
        <name>phosphoenolpyruvate</name>
        <dbReference type="ChEBI" id="CHEBI:58702"/>
    </ligand>
</feature>
<feature type="binding site" evidence="1">
    <location>
        <position position="394"/>
    </location>
    <ligand>
        <name>phosphoenolpyruvate</name>
        <dbReference type="ChEBI" id="CHEBI:58702"/>
    </ligand>
</feature>
<name>AROA_CHLT3</name>
<protein>
    <recommendedName>
        <fullName evidence="1">3-phosphoshikimate 1-carboxyvinyltransferase</fullName>
        <ecNumber evidence="1">2.5.1.19</ecNumber>
    </recommendedName>
    <alternativeName>
        <fullName evidence="1">5-enolpyruvylshikimate-3-phosphate synthase</fullName>
        <shortName evidence="1">EPSP synthase</shortName>
        <shortName evidence="1">EPSPS</shortName>
    </alternativeName>
</protein>
<proteinExistence type="inferred from homology"/>
<sequence length="435" mass="47621">MKTFNGTFFNLPPDKSISHRTALIGALSNGITEITNYSAGLDNQTTLSVLQSLGVDIQQESFLTNDGYEQRKVVIKSSGLWSLSRSKRELMCNNSGSTIRMLSGILAAQPFRTTLVGDHSLMKRPMRRVAEPLTQMGASIKLSETGAPPIEIEGKKPLSPIQFYQKIPSAQVKSLVIFAALHADGISEIIEPIQTRNHTELMLGLEPELQPDGSRKIVIEGQKNIEAKPFTVPADPSGACFLVALGLLSGKSDIRLKNVGLNHTRAGYLSLLREAGAKLPTENNRTIGGELLGDIIISNDYITKPLRINDAQIVSDIIDEIPMLAVLSAMATGEFELHHAAELRAKESDRIHALVMNLQRLGFVCEEYKDGFCVTGRTHNPTGTIEITTFYDHRIAMSFAIAGHFSNAEIQLDDNSSIAVSFPNFFSLIDSMQKT</sequence>
<keyword id="KW-0028">Amino-acid biosynthesis</keyword>
<keyword id="KW-0057">Aromatic amino acid biosynthesis</keyword>
<keyword id="KW-0963">Cytoplasm</keyword>
<keyword id="KW-1185">Reference proteome</keyword>
<keyword id="KW-0808">Transferase</keyword>
<reference key="1">
    <citation type="submission" date="2008-06" db="EMBL/GenBank/DDBJ databases">
        <title>Complete sequence of Chloroherpeton thalassium ATCC 35110.</title>
        <authorList>
            <consortium name="US DOE Joint Genome Institute"/>
            <person name="Lucas S."/>
            <person name="Copeland A."/>
            <person name="Lapidus A."/>
            <person name="Glavina del Rio T."/>
            <person name="Dalin E."/>
            <person name="Tice H."/>
            <person name="Bruce D."/>
            <person name="Goodwin L."/>
            <person name="Pitluck S."/>
            <person name="Schmutz J."/>
            <person name="Larimer F."/>
            <person name="Land M."/>
            <person name="Hauser L."/>
            <person name="Kyrpides N."/>
            <person name="Mikhailova N."/>
            <person name="Liu Z."/>
            <person name="Li T."/>
            <person name="Zhao F."/>
            <person name="Overmann J."/>
            <person name="Bryant D.A."/>
            <person name="Richardson P."/>
        </authorList>
    </citation>
    <scope>NUCLEOTIDE SEQUENCE [LARGE SCALE GENOMIC DNA]</scope>
    <source>
        <strain>ATCC 35110 / GB-78</strain>
    </source>
</reference>
<dbReference type="EC" id="2.5.1.19" evidence="1"/>
<dbReference type="EMBL" id="CP001100">
    <property type="protein sequence ID" value="ACF13820.1"/>
    <property type="molecule type" value="Genomic_DNA"/>
</dbReference>
<dbReference type="RefSeq" id="WP_012499904.1">
    <property type="nucleotide sequence ID" value="NC_011026.1"/>
</dbReference>
<dbReference type="SMR" id="B3QZC7"/>
<dbReference type="STRING" id="517418.Ctha_1357"/>
<dbReference type="KEGG" id="cts:Ctha_1357"/>
<dbReference type="eggNOG" id="COG0128">
    <property type="taxonomic scope" value="Bacteria"/>
</dbReference>
<dbReference type="HOGENOM" id="CLU_024321_0_1_10"/>
<dbReference type="OrthoDB" id="9809920at2"/>
<dbReference type="UniPathway" id="UPA00053">
    <property type="reaction ID" value="UER00089"/>
</dbReference>
<dbReference type="Proteomes" id="UP000001208">
    <property type="component" value="Chromosome"/>
</dbReference>
<dbReference type="GO" id="GO:0005737">
    <property type="term" value="C:cytoplasm"/>
    <property type="evidence" value="ECO:0007669"/>
    <property type="project" value="UniProtKB-SubCell"/>
</dbReference>
<dbReference type="GO" id="GO:0003866">
    <property type="term" value="F:3-phosphoshikimate 1-carboxyvinyltransferase activity"/>
    <property type="evidence" value="ECO:0007669"/>
    <property type="project" value="UniProtKB-UniRule"/>
</dbReference>
<dbReference type="GO" id="GO:0008652">
    <property type="term" value="P:amino acid biosynthetic process"/>
    <property type="evidence" value="ECO:0007669"/>
    <property type="project" value="UniProtKB-KW"/>
</dbReference>
<dbReference type="GO" id="GO:0009073">
    <property type="term" value="P:aromatic amino acid family biosynthetic process"/>
    <property type="evidence" value="ECO:0007669"/>
    <property type="project" value="UniProtKB-KW"/>
</dbReference>
<dbReference type="GO" id="GO:0009423">
    <property type="term" value="P:chorismate biosynthetic process"/>
    <property type="evidence" value="ECO:0007669"/>
    <property type="project" value="UniProtKB-UniRule"/>
</dbReference>
<dbReference type="CDD" id="cd01556">
    <property type="entry name" value="EPSP_synthase"/>
    <property type="match status" value="1"/>
</dbReference>
<dbReference type="FunFam" id="3.65.10.10:FF:000005">
    <property type="entry name" value="3-phosphoshikimate 1-carboxyvinyltransferase"/>
    <property type="match status" value="1"/>
</dbReference>
<dbReference type="Gene3D" id="3.65.10.10">
    <property type="entry name" value="Enolpyruvate transferase domain"/>
    <property type="match status" value="2"/>
</dbReference>
<dbReference type="HAMAP" id="MF_00210">
    <property type="entry name" value="EPSP_synth"/>
    <property type="match status" value="1"/>
</dbReference>
<dbReference type="InterPro" id="IPR001986">
    <property type="entry name" value="Enolpyruvate_Tfrase_dom"/>
</dbReference>
<dbReference type="InterPro" id="IPR036968">
    <property type="entry name" value="Enolpyruvate_Tfrase_sf"/>
</dbReference>
<dbReference type="InterPro" id="IPR006264">
    <property type="entry name" value="EPSP_synthase"/>
</dbReference>
<dbReference type="InterPro" id="IPR023193">
    <property type="entry name" value="EPSP_synthase_CS"/>
</dbReference>
<dbReference type="InterPro" id="IPR013792">
    <property type="entry name" value="RNA3'P_cycl/enolpyr_Trfase_a/b"/>
</dbReference>
<dbReference type="NCBIfam" id="TIGR01356">
    <property type="entry name" value="aroA"/>
    <property type="match status" value="1"/>
</dbReference>
<dbReference type="PANTHER" id="PTHR21090">
    <property type="entry name" value="AROM/DEHYDROQUINATE SYNTHASE"/>
    <property type="match status" value="1"/>
</dbReference>
<dbReference type="PANTHER" id="PTHR21090:SF5">
    <property type="entry name" value="PENTAFUNCTIONAL AROM POLYPEPTIDE"/>
    <property type="match status" value="1"/>
</dbReference>
<dbReference type="Pfam" id="PF00275">
    <property type="entry name" value="EPSP_synthase"/>
    <property type="match status" value="1"/>
</dbReference>
<dbReference type="PIRSF" id="PIRSF000505">
    <property type="entry name" value="EPSPS"/>
    <property type="match status" value="1"/>
</dbReference>
<dbReference type="SUPFAM" id="SSF55205">
    <property type="entry name" value="EPT/RTPC-like"/>
    <property type="match status" value="1"/>
</dbReference>
<dbReference type="PROSITE" id="PS00885">
    <property type="entry name" value="EPSP_SYNTHASE_2"/>
    <property type="match status" value="1"/>
</dbReference>